<dbReference type="EMBL" id="CP000562">
    <property type="protein sequence ID" value="ABN56501.1"/>
    <property type="molecule type" value="Genomic_DNA"/>
</dbReference>
<dbReference type="RefSeq" id="WP_011843411.1">
    <property type="nucleotide sequence ID" value="NC_009051.1"/>
</dbReference>
<dbReference type="SMR" id="A3CT01"/>
<dbReference type="STRING" id="368407.Memar_0568"/>
<dbReference type="GeneID" id="4848220"/>
<dbReference type="KEGG" id="mem:Memar_0568"/>
<dbReference type="eggNOG" id="arCOG04099">
    <property type="taxonomic scope" value="Archaea"/>
</dbReference>
<dbReference type="HOGENOM" id="CLU_097347_1_0_2"/>
<dbReference type="OrthoDB" id="30559at2157"/>
<dbReference type="Proteomes" id="UP000002146">
    <property type="component" value="Chromosome"/>
</dbReference>
<dbReference type="GO" id="GO:0022627">
    <property type="term" value="C:cytosolic small ribosomal subunit"/>
    <property type="evidence" value="ECO:0007669"/>
    <property type="project" value="TreeGrafter"/>
</dbReference>
<dbReference type="GO" id="GO:0019843">
    <property type="term" value="F:rRNA binding"/>
    <property type="evidence" value="ECO:0007669"/>
    <property type="project" value="UniProtKB-UniRule"/>
</dbReference>
<dbReference type="GO" id="GO:0003735">
    <property type="term" value="F:structural constituent of ribosome"/>
    <property type="evidence" value="ECO:0007669"/>
    <property type="project" value="InterPro"/>
</dbReference>
<dbReference type="GO" id="GO:0000028">
    <property type="term" value="P:ribosomal small subunit assembly"/>
    <property type="evidence" value="ECO:0007669"/>
    <property type="project" value="TreeGrafter"/>
</dbReference>
<dbReference type="GO" id="GO:0006412">
    <property type="term" value="P:translation"/>
    <property type="evidence" value="ECO:0007669"/>
    <property type="project" value="UniProtKB-UniRule"/>
</dbReference>
<dbReference type="FunFam" id="3.30.860.10:FF:000002">
    <property type="entry name" value="40S ribosomal protein S15"/>
    <property type="match status" value="1"/>
</dbReference>
<dbReference type="Gene3D" id="3.30.860.10">
    <property type="entry name" value="30s Ribosomal Protein S19, Chain A"/>
    <property type="match status" value="1"/>
</dbReference>
<dbReference type="HAMAP" id="MF_00531">
    <property type="entry name" value="Ribosomal_uS19"/>
    <property type="match status" value="1"/>
</dbReference>
<dbReference type="InterPro" id="IPR002222">
    <property type="entry name" value="Ribosomal_uS19"/>
</dbReference>
<dbReference type="InterPro" id="IPR005713">
    <property type="entry name" value="Ribosomal_uS19_euk/arc"/>
</dbReference>
<dbReference type="InterPro" id="IPR023575">
    <property type="entry name" value="Ribosomal_uS19_SF"/>
</dbReference>
<dbReference type="NCBIfam" id="NF003121">
    <property type="entry name" value="PRK04038.1"/>
    <property type="match status" value="1"/>
</dbReference>
<dbReference type="NCBIfam" id="TIGR01025">
    <property type="entry name" value="uS19_arch"/>
    <property type="match status" value="1"/>
</dbReference>
<dbReference type="PANTHER" id="PTHR11880">
    <property type="entry name" value="RIBOSOMAL PROTEIN S19P FAMILY MEMBER"/>
    <property type="match status" value="1"/>
</dbReference>
<dbReference type="PANTHER" id="PTHR11880:SF2">
    <property type="entry name" value="SMALL RIBOSOMAL SUBUNIT PROTEIN US19"/>
    <property type="match status" value="1"/>
</dbReference>
<dbReference type="Pfam" id="PF00203">
    <property type="entry name" value="Ribosomal_S19"/>
    <property type="match status" value="1"/>
</dbReference>
<dbReference type="PIRSF" id="PIRSF002144">
    <property type="entry name" value="Ribosomal_S19"/>
    <property type="match status" value="1"/>
</dbReference>
<dbReference type="PRINTS" id="PR00975">
    <property type="entry name" value="RIBOSOMALS19"/>
</dbReference>
<dbReference type="SUPFAM" id="SSF54570">
    <property type="entry name" value="Ribosomal protein S19"/>
    <property type="match status" value="1"/>
</dbReference>
<comment type="function">
    <text evidence="1">Protein S19 forms a complex with S13 that binds strongly to the 16S ribosomal RNA.</text>
</comment>
<comment type="similarity">
    <text evidence="1">Belongs to the universal ribosomal protein uS19 family.</text>
</comment>
<organism>
    <name type="scientific">Methanoculleus marisnigri (strain ATCC 35101 / DSM 1498 / JR1)</name>
    <dbReference type="NCBI Taxonomy" id="368407"/>
    <lineage>
        <taxon>Archaea</taxon>
        <taxon>Methanobacteriati</taxon>
        <taxon>Methanobacteriota</taxon>
        <taxon>Stenosarchaea group</taxon>
        <taxon>Methanomicrobia</taxon>
        <taxon>Methanomicrobiales</taxon>
        <taxon>Methanomicrobiaceae</taxon>
        <taxon>Methanoculleus</taxon>
    </lineage>
</organism>
<proteinExistence type="inferred from homology"/>
<accession>A3CT01</accession>
<feature type="chain" id="PRO_0000354319" description="Small ribosomal subunit protein uS19">
    <location>
        <begin position="1"/>
        <end position="137"/>
    </location>
</feature>
<keyword id="KW-0687">Ribonucleoprotein</keyword>
<keyword id="KW-0689">Ribosomal protein</keyword>
<keyword id="KW-0694">RNA-binding</keyword>
<keyword id="KW-0699">rRNA-binding</keyword>
<name>RS19_METMJ</name>
<protein>
    <recommendedName>
        <fullName evidence="1">Small ribosomal subunit protein uS19</fullName>
    </recommendedName>
    <alternativeName>
        <fullName evidence="2">30S ribosomal protein S19</fullName>
    </alternativeName>
</protein>
<evidence type="ECO:0000255" key="1">
    <source>
        <dbReference type="HAMAP-Rule" id="MF_00531"/>
    </source>
</evidence>
<evidence type="ECO:0000305" key="2"/>
<gene>
    <name evidence="1" type="primary">rps19</name>
    <name type="ordered locus">Memar_0568</name>
</gene>
<sequence length="137" mass="15907">MAKKTQKRMPRRREEFTYRGYSVADLQQMALSELLPLMPARARRKFDRGLSREHEKLLADLRSGDENIRTHLRDMIIMPEMVGRSIEIHNGKEFQKVEIQPEAVFHYLGEFALTRRRVAHGSAGIGATRSSKYVPLK</sequence>
<reference key="1">
    <citation type="journal article" date="2009" name="Stand. Genomic Sci.">
        <title>Complete genome sequence of Methanoculleus marisnigri Romesser et al. 1981 type strain JR1.</title>
        <authorList>
            <person name="Anderson I.J."/>
            <person name="Sieprawska-Lupa M."/>
            <person name="Lapidus A."/>
            <person name="Nolan M."/>
            <person name="Copeland A."/>
            <person name="Glavina Del Rio T."/>
            <person name="Tice H."/>
            <person name="Dalin E."/>
            <person name="Barry K."/>
            <person name="Saunders E."/>
            <person name="Han C."/>
            <person name="Brettin T."/>
            <person name="Detter J.C."/>
            <person name="Bruce D."/>
            <person name="Mikhailova N."/>
            <person name="Pitluck S."/>
            <person name="Hauser L."/>
            <person name="Land M."/>
            <person name="Lucas S."/>
            <person name="Richardson P."/>
            <person name="Whitman W.B."/>
            <person name="Kyrpides N.C."/>
        </authorList>
    </citation>
    <scope>NUCLEOTIDE SEQUENCE [LARGE SCALE GENOMIC DNA]</scope>
    <source>
        <strain>ATCC 35101 / DSM 1498 / JR1</strain>
    </source>
</reference>